<sequence>MIVLGLEGTAHTISCGILDENSIMANVSSMYKPKTGGIHPTQAAAHHVDKVSEVIAKAIEIAGIKPSDIDLVAFSMGPGLGPSLRVTSTAARTLAVTLKRPIIGVNHPLGHIEIGKRLSGAQDPVMLYVSGGNTQVIAHLNGRYRVLGETLDIGIGNMIDKFARYAGIPFPGGPEIEKLAKDGRKLLTLPYSVKGMDTSFSGILTSALEYLKKGEPVEDISFSIQETAFSMLVEVLERALYVSGKDEVLMAGGVALNNRLREMVSEMGREVDATTYMTDKNYCMDNGAMIAQAGLLMYKSGIRMNIEDTSINPRYRIDEVDAPWVIEKNVKYRDAGAESRIVNTDFYGRSAVKKIRIAKGYRLKELDERIRGERMKNEFTVIRRMRDAGICVPIVYDYDPFEKTLTLSQIQGELLRDVIRARPNVMGNVGHDVAVMHKNKISHGDLTVNNIIVSDRICFIDASMGKVNAELEDLAVDVYTLEDSINSLSENGKTLMKEFKMSYRANFPQANDVLNIVEDIRRRHRYV</sequence>
<organism>
    <name type="scientific">Thermoplasma volcanium (strain ATCC 51530 / DSM 4299 / JCM 9571 / NBRC 15438 / GSS1)</name>
    <dbReference type="NCBI Taxonomy" id="273116"/>
    <lineage>
        <taxon>Archaea</taxon>
        <taxon>Methanobacteriati</taxon>
        <taxon>Thermoplasmatota</taxon>
        <taxon>Thermoplasmata</taxon>
        <taxon>Thermoplasmatales</taxon>
        <taxon>Thermoplasmataceae</taxon>
        <taxon>Thermoplasma</taxon>
    </lineage>
</organism>
<comment type="function">
    <text evidence="1">Required for the formation of a threonylcarbamoyl group on adenosine at position 37 (t(6)A37) in tRNAs that read codons beginning with adenine. Is a component of the KEOPS complex that is probably involved in the transfer of the threonylcarbamoyl moiety of threonylcarbamoyl-AMP (TC-AMP) to the N6 group of A37. The Kae1 domain likely plays a direct catalytic role in this reaction. The Bud32 domain probably displays kinase activity that regulates Kae1 function.</text>
</comment>
<comment type="catalytic activity">
    <reaction evidence="1">
        <text>L-seryl-[protein] + ATP = O-phospho-L-seryl-[protein] + ADP + H(+)</text>
        <dbReference type="Rhea" id="RHEA:17989"/>
        <dbReference type="Rhea" id="RHEA-COMP:9863"/>
        <dbReference type="Rhea" id="RHEA-COMP:11604"/>
        <dbReference type="ChEBI" id="CHEBI:15378"/>
        <dbReference type="ChEBI" id="CHEBI:29999"/>
        <dbReference type="ChEBI" id="CHEBI:30616"/>
        <dbReference type="ChEBI" id="CHEBI:83421"/>
        <dbReference type="ChEBI" id="CHEBI:456216"/>
        <dbReference type="EC" id="2.7.11.1"/>
    </reaction>
</comment>
<comment type="catalytic activity">
    <reaction evidence="1">
        <text>L-threonyl-[protein] + ATP = O-phospho-L-threonyl-[protein] + ADP + H(+)</text>
        <dbReference type="Rhea" id="RHEA:46608"/>
        <dbReference type="Rhea" id="RHEA-COMP:11060"/>
        <dbReference type="Rhea" id="RHEA-COMP:11605"/>
        <dbReference type="ChEBI" id="CHEBI:15378"/>
        <dbReference type="ChEBI" id="CHEBI:30013"/>
        <dbReference type="ChEBI" id="CHEBI:30616"/>
        <dbReference type="ChEBI" id="CHEBI:61977"/>
        <dbReference type="ChEBI" id="CHEBI:456216"/>
        <dbReference type="EC" id="2.7.11.1"/>
    </reaction>
</comment>
<comment type="catalytic activity">
    <reaction evidence="1">
        <text>L-threonylcarbamoyladenylate + adenosine(37) in tRNA = N(6)-L-threonylcarbamoyladenosine(37) in tRNA + AMP + H(+)</text>
        <dbReference type="Rhea" id="RHEA:37059"/>
        <dbReference type="Rhea" id="RHEA-COMP:10162"/>
        <dbReference type="Rhea" id="RHEA-COMP:10163"/>
        <dbReference type="ChEBI" id="CHEBI:15378"/>
        <dbReference type="ChEBI" id="CHEBI:73682"/>
        <dbReference type="ChEBI" id="CHEBI:74411"/>
        <dbReference type="ChEBI" id="CHEBI:74418"/>
        <dbReference type="ChEBI" id="CHEBI:456215"/>
        <dbReference type="EC" id="2.3.1.234"/>
    </reaction>
</comment>
<comment type="cofactor">
    <cofactor evidence="1">
        <name>Fe(2+)</name>
        <dbReference type="ChEBI" id="CHEBI:29033"/>
    </cofactor>
    <text evidence="1">Binds 1 Fe(2+) ion per subunit.</text>
</comment>
<comment type="subunit">
    <text evidence="1">Component of the KEOPS complex that consists of Kae1, Bud32, Cgi121 and Pcc1; the whole complex dimerizes.</text>
</comment>
<comment type="subcellular location">
    <subcellularLocation>
        <location evidence="1">Cytoplasm</location>
    </subcellularLocation>
</comment>
<comment type="similarity">
    <text evidence="1">In the N-terminal section; belongs to the KAE1 / TsaD family.</text>
</comment>
<comment type="similarity">
    <text evidence="1">In the C-terminal section; belongs to the protein kinase superfamily. Tyr protein kinase family. BUD32 subfamily.</text>
</comment>
<accession>Q978W6</accession>
<evidence type="ECO:0000255" key="1">
    <source>
        <dbReference type="HAMAP-Rule" id="MF_01447"/>
    </source>
</evidence>
<name>KAE1B_THEVO</name>
<reference key="1">
    <citation type="journal article" date="2000" name="Proc. Natl. Acad. Sci. U.S.A.">
        <title>Archaeal adaptation to higher temperatures revealed by genomic sequence of Thermoplasma volcanium.</title>
        <authorList>
            <person name="Kawashima T."/>
            <person name="Amano N."/>
            <person name="Koike H."/>
            <person name="Makino S."/>
            <person name="Higuchi S."/>
            <person name="Kawashima-Ohya Y."/>
            <person name="Watanabe K."/>
            <person name="Yamazaki M."/>
            <person name="Kanehori K."/>
            <person name="Kawamoto T."/>
            <person name="Nunoshiba T."/>
            <person name="Yamamoto Y."/>
            <person name="Aramaki H."/>
            <person name="Makino K."/>
            <person name="Suzuki M."/>
        </authorList>
    </citation>
    <scope>NUCLEOTIDE SEQUENCE [LARGE SCALE GENOMIC DNA]</scope>
    <source>
        <strain>ATCC 51530 / DSM 4299 / JCM 9571 / NBRC 15438 / GSS1</strain>
    </source>
</reference>
<feature type="chain" id="PRO_0000303662" description="Probable bifunctional tRNA threonylcarbamoyladenosine biosynthesis protein">
    <location>
        <begin position="1"/>
        <end position="527"/>
    </location>
</feature>
<feature type="domain" description="Protein kinase" evidence="1">
    <location>
        <begin position="330"/>
        <end position="527"/>
    </location>
</feature>
<feature type="region of interest" description="Kae1">
    <location>
        <begin position="1"/>
        <end position="324"/>
    </location>
</feature>
<feature type="active site" description="Proton acceptor; for kinase activity" evidence="1">
    <location>
        <position position="445"/>
    </location>
</feature>
<feature type="binding site" evidence="1">
    <location>
        <position position="107"/>
    </location>
    <ligand>
        <name>Fe cation</name>
        <dbReference type="ChEBI" id="CHEBI:24875"/>
    </ligand>
</feature>
<feature type="binding site" evidence="1">
    <location>
        <position position="111"/>
    </location>
    <ligand>
        <name>Fe cation</name>
        <dbReference type="ChEBI" id="CHEBI:24875"/>
    </ligand>
</feature>
<feature type="binding site" evidence="1">
    <location>
        <begin position="128"/>
        <end position="132"/>
    </location>
    <ligand>
        <name>L-threonylcarbamoyladenylate</name>
        <dbReference type="ChEBI" id="CHEBI:73682"/>
    </ligand>
</feature>
<feature type="binding site" evidence="1">
    <location>
        <position position="128"/>
    </location>
    <ligand>
        <name>Fe cation</name>
        <dbReference type="ChEBI" id="CHEBI:24875"/>
    </ligand>
</feature>
<feature type="binding site" evidence="1">
    <location>
        <position position="160"/>
    </location>
    <ligand>
        <name>L-threonylcarbamoyladenylate</name>
        <dbReference type="ChEBI" id="CHEBI:73682"/>
    </ligand>
</feature>
<feature type="binding site" evidence="1">
    <location>
        <position position="173"/>
    </location>
    <ligand>
        <name>L-threonylcarbamoyladenylate</name>
        <dbReference type="ChEBI" id="CHEBI:73682"/>
    </ligand>
</feature>
<feature type="binding site" evidence="1">
    <location>
        <position position="177"/>
    </location>
    <ligand>
        <name>L-threonylcarbamoyladenylate</name>
        <dbReference type="ChEBI" id="CHEBI:73682"/>
    </ligand>
</feature>
<feature type="binding site" evidence="1">
    <location>
        <position position="257"/>
    </location>
    <ligand>
        <name>L-threonylcarbamoyladenylate</name>
        <dbReference type="ChEBI" id="CHEBI:73682"/>
    </ligand>
</feature>
<feature type="binding site" evidence="1">
    <location>
        <position position="285"/>
    </location>
    <ligand>
        <name>Fe cation</name>
        <dbReference type="ChEBI" id="CHEBI:24875"/>
    </ligand>
</feature>
<feature type="binding site" evidence="1">
    <location>
        <begin position="333"/>
        <end position="341"/>
    </location>
    <ligand>
        <name>ATP</name>
        <dbReference type="ChEBI" id="CHEBI:30616"/>
    </ligand>
</feature>
<feature type="binding site" evidence="1">
    <location>
        <position position="354"/>
    </location>
    <ligand>
        <name>ATP</name>
        <dbReference type="ChEBI" id="CHEBI:30616"/>
    </ligand>
</feature>
<proteinExistence type="inferred from homology"/>
<gene>
    <name type="ordered locus">TV1299</name>
    <name type="ORF">TVG1340828</name>
</gene>
<keyword id="KW-0012">Acyltransferase</keyword>
<keyword id="KW-0067">ATP-binding</keyword>
<keyword id="KW-0963">Cytoplasm</keyword>
<keyword id="KW-0408">Iron</keyword>
<keyword id="KW-0418">Kinase</keyword>
<keyword id="KW-0479">Metal-binding</keyword>
<keyword id="KW-0511">Multifunctional enzyme</keyword>
<keyword id="KW-0547">Nucleotide-binding</keyword>
<keyword id="KW-0723">Serine/threonine-protein kinase</keyword>
<keyword id="KW-0808">Transferase</keyword>
<keyword id="KW-0819">tRNA processing</keyword>
<protein>
    <recommendedName>
        <fullName evidence="1">Probable bifunctional tRNA threonylcarbamoyladenosine biosynthesis protein</fullName>
    </recommendedName>
    <domain>
        <recommendedName>
            <fullName evidence="1">tRNA N6-adenosine threonylcarbamoyltransferase</fullName>
            <ecNumber evidence="1">2.3.1.234</ecNumber>
        </recommendedName>
        <alternativeName>
            <fullName>N6-L-threonylcarbamoyladenine synthase</fullName>
            <shortName>t(6)A synthase</shortName>
        </alternativeName>
        <alternativeName>
            <fullName evidence="1">t(6)A37 threonylcarbamoyladenosine biosynthesis protein Kae1</fullName>
        </alternativeName>
        <alternativeName>
            <fullName evidence="1">tRNA threonylcarbamoyladenosine biosynthesis protein Kae1</fullName>
        </alternativeName>
    </domain>
    <domain>
        <recommendedName>
            <fullName evidence="1">Serine/threonine-protein kinase Bud32</fullName>
            <ecNumber evidence="1">2.7.11.1</ecNumber>
        </recommendedName>
    </domain>
</protein>
<dbReference type="EC" id="2.3.1.234" evidence="1"/>
<dbReference type="EC" id="2.7.11.1" evidence="1"/>
<dbReference type="EMBL" id="BA000011">
    <property type="protein sequence ID" value="BAB60441.1"/>
    <property type="molecule type" value="Genomic_DNA"/>
</dbReference>
<dbReference type="RefSeq" id="WP_010917534.1">
    <property type="nucleotide sequence ID" value="NC_002689.2"/>
</dbReference>
<dbReference type="SMR" id="Q978W6"/>
<dbReference type="STRING" id="273116.gene:9382106"/>
<dbReference type="PaxDb" id="273116-14325538"/>
<dbReference type="DNASU" id="1441416"/>
<dbReference type="GeneID" id="1441416"/>
<dbReference type="KEGG" id="tvo:TVG1340828"/>
<dbReference type="eggNOG" id="arCOG01183">
    <property type="taxonomic scope" value="Archaea"/>
</dbReference>
<dbReference type="eggNOG" id="arCOG01185">
    <property type="taxonomic scope" value="Archaea"/>
</dbReference>
<dbReference type="HOGENOM" id="CLU_023208_2_2_2"/>
<dbReference type="OrthoDB" id="6818at2157"/>
<dbReference type="PhylomeDB" id="Q978W6"/>
<dbReference type="Proteomes" id="UP000001017">
    <property type="component" value="Chromosome"/>
</dbReference>
<dbReference type="GO" id="GO:0005737">
    <property type="term" value="C:cytoplasm"/>
    <property type="evidence" value="ECO:0007669"/>
    <property type="project" value="UniProtKB-SubCell"/>
</dbReference>
<dbReference type="GO" id="GO:0000408">
    <property type="term" value="C:EKC/KEOPS complex"/>
    <property type="evidence" value="ECO:0007669"/>
    <property type="project" value="InterPro"/>
</dbReference>
<dbReference type="GO" id="GO:0005524">
    <property type="term" value="F:ATP binding"/>
    <property type="evidence" value="ECO:0007669"/>
    <property type="project" value="UniProtKB-UniRule"/>
</dbReference>
<dbReference type="GO" id="GO:0005506">
    <property type="term" value="F:iron ion binding"/>
    <property type="evidence" value="ECO:0007669"/>
    <property type="project" value="UniProtKB-UniRule"/>
</dbReference>
<dbReference type="GO" id="GO:0004222">
    <property type="term" value="F:metalloendopeptidase activity"/>
    <property type="evidence" value="ECO:0007669"/>
    <property type="project" value="InterPro"/>
</dbReference>
<dbReference type="GO" id="GO:0061711">
    <property type="term" value="F:N(6)-L-threonylcarbamoyladenine synthase activity"/>
    <property type="evidence" value="ECO:0007669"/>
    <property type="project" value="UniProtKB-EC"/>
</dbReference>
<dbReference type="GO" id="GO:0106310">
    <property type="term" value="F:protein serine kinase activity"/>
    <property type="evidence" value="ECO:0007669"/>
    <property type="project" value="RHEA"/>
</dbReference>
<dbReference type="GO" id="GO:0004674">
    <property type="term" value="F:protein serine/threonine kinase activity"/>
    <property type="evidence" value="ECO:0007669"/>
    <property type="project" value="UniProtKB-KW"/>
</dbReference>
<dbReference type="GO" id="GO:0004712">
    <property type="term" value="F:protein serine/threonine/tyrosine kinase activity"/>
    <property type="evidence" value="ECO:0007669"/>
    <property type="project" value="UniProtKB-UniRule"/>
</dbReference>
<dbReference type="GO" id="GO:0008270">
    <property type="term" value="F:zinc ion binding"/>
    <property type="evidence" value="ECO:0007669"/>
    <property type="project" value="InterPro"/>
</dbReference>
<dbReference type="GO" id="GO:0002949">
    <property type="term" value="P:tRNA threonylcarbamoyladenosine modification"/>
    <property type="evidence" value="ECO:0007669"/>
    <property type="project" value="UniProtKB-UniRule"/>
</dbReference>
<dbReference type="CDD" id="cd24131">
    <property type="entry name" value="ASKHA_NBD_Kae1_arch_bac"/>
    <property type="match status" value="1"/>
</dbReference>
<dbReference type="FunFam" id="3.30.420.40:FF:000038">
    <property type="entry name" value="Probable tRNA N6-adenosine threonylcarbamoyltransferase"/>
    <property type="match status" value="1"/>
</dbReference>
<dbReference type="Gene3D" id="3.30.420.40">
    <property type="match status" value="2"/>
</dbReference>
<dbReference type="Gene3D" id="3.30.200.20">
    <property type="entry name" value="Phosphorylase Kinase, domain 1"/>
    <property type="match status" value="1"/>
</dbReference>
<dbReference type="Gene3D" id="1.10.510.10">
    <property type="entry name" value="Transferase(Phosphotransferase) domain 1"/>
    <property type="match status" value="1"/>
</dbReference>
<dbReference type="HAMAP" id="MF_01446">
    <property type="entry name" value="Kae1"/>
    <property type="match status" value="1"/>
</dbReference>
<dbReference type="HAMAP" id="MF_01447">
    <property type="entry name" value="Kae1_Bud32_arch"/>
    <property type="match status" value="1"/>
</dbReference>
<dbReference type="InterPro" id="IPR043129">
    <property type="entry name" value="ATPase_NBD"/>
</dbReference>
<dbReference type="InterPro" id="IPR022495">
    <property type="entry name" value="Bud32"/>
</dbReference>
<dbReference type="InterPro" id="IPR000905">
    <property type="entry name" value="Gcp-like_dom"/>
</dbReference>
<dbReference type="InterPro" id="IPR017861">
    <property type="entry name" value="KAE1/TsaD"/>
</dbReference>
<dbReference type="InterPro" id="IPR034680">
    <property type="entry name" value="Kae1_archaea_euk"/>
</dbReference>
<dbReference type="InterPro" id="IPR011009">
    <property type="entry name" value="Kinase-like_dom_sf"/>
</dbReference>
<dbReference type="InterPro" id="IPR017860">
    <property type="entry name" value="Peptidase_M22_CS"/>
</dbReference>
<dbReference type="InterPro" id="IPR009220">
    <property type="entry name" value="tRNA_threonyl_synthase/kinase"/>
</dbReference>
<dbReference type="InterPro" id="IPR008266">
    <property type="entry name" value="Tyr_kinase_AS"/>
</dbReference>
<dbReference type="NCBIfam" id="TIGR03724">
    <property type="entry name" value="arch_bud32"/>
    <property type="match status" value="1"/>
</dbReference>
<dbReference type="NCBIfam" id="TIGR03722">
    <property type="entry name" value="arch_KAE1"/>
    <property type="match status" value="1"/>
</dbReference>
<dbReference type="NCBIfam" id="TIGR00329">
    <property type="entry name" value="gcp_kae1"/>
    <property type="match status" value="1"/>
</dbReference>
<dbReference type="NCBIfam" id="NF007174">
    <property type="entry name" value="PRK09605.1"/>
    <property type="match status" value="1"/>
</dbReference>
<dbReference type="PANTHER" id="PTHR11735">
    <property type="entry name" value="TRNA N6-ADENOSINE THREONYLCARBAMOYLTRANSFERASE"/>
    <property type="match status" value="1"/>
</dbReference>
<dbReference type="PANTHER" id="PTHR11735:SF14">
    <property type="entry name" value="TRNA N6-ADENOSINE THREONYLCARBAMOYLTRANSFERASE"/>
    <property type="match status" value="1"/>
</dbReference>
<dbReference type="Pfam" id="PF00814">
    <property type="entry name" value="TsaD"/>
    <property type="match status" value="1"/>
</dbReference>
<dbReference type="PIRSF" id="PIRSF036401">
    <property type="entry name" value="Gcp_STYKS"/>
    <property type="match status" value="1"/>
</dbReference>
<dbReference type="PRINTS" id="PR00789">
    <property type="entry name" value="OSIALOPTASE"/>
</dbReference>
<dbReference type="SUPFAM" id="SSF53067">
    <property type="entry name" value="Actin-like ATPase domain"/>
    <property type="match status" value="1"/>
</dbReference>
<dbReference type="SUPFAM" id="SSF56112">
    <property type="entry name" value="Protein kinase-like (PK-like)"/>
    <property type="match status" value="1"/>
</dbReference>
<dbReference type="PROSITE" id="PS01016">
    <property type="entry name" value="GLYCOPROTEASE"/>
    <property type="match status" value="1"/>
</dbReference>
<dbReference type="PROSITE" id="PS00109">
    <property type="entry name" value="PROTEIN_KINASE_TYR"/>
    <property type="match status" value="1"/>
</dbReference>